<keyword id="KW-0963">Cytoplasm</keyword>
<keyword id="KW-0489">Methyltransferase</keyword>
<keyword id="KW-1185">Reference proteome</keyword>
<keyword id="KW-0698">rRNA processing</keyword>
<keyword id="KW-0949">S-adenosyl-L-methionine</keyword>
<keyword id="KW-0808">Transferase</keyword>
<gene>
    <name evidence="1" type="primary">rsmC</name>
    <name type="ordered locus">YPO0427</name>
    <name type="ordered locus">y3753</name>
    <name type="ordered locus">YP_3754</name>
</gene>
<protein>
    <recommendedName>
        <fullName evidence="1">Ribosomal RNA small subunit methyltransferase C</fullName>
        <ecNumber evidence="1">2.1.1.172</ecNumber>
    </recommendedName>
    <alternativeName>
        <fullName evidence="1">16S rRNA m2G1207 methyltransferase</fullName>
    </alternativeName>
    <alternativeName>
        <fullName evidence="1">rRNA (guanine-N(2)-)-methyltransferase RsmC</fullName>
    </alternativeName>
</protein>
<sequence>MSALTPASEVILRHSDEFIARHVLFAGDLQDALPAQFDAAGVRVHTNQYHHWQLLSNTLEENVQFGLLATAETLAACDTLIYYWPKSKQEAQFQLANLLSILPVGTDIFVVGENRSGVRSAEEMLADFAQLAKIDSARRCGLYHGRLDKQPEFDADAWWESYQVGGVTVKTLPGVFSRDSLDSGSHLLLSTFNEPFKGSVLDVGCGAGVLASVLAQQSPKIKWTLSDVSAAAIEASRATLAVNNIEAQVIASNVYSDIKGRFEMIISNPPFHDGIQTSLTAAEMLIRGATAHLHVGGKLRIVANSFLPYPALLDAAFGSHEVLAQNGRFKVYQATVGRPPRDPKKKR</sequence>
<feature type="chain" id="PRO_0000369800" description="Ribosomal RNA small subunit methyltransferase C">
    <location>
        <begin position="1"/>
        <end position="347"/>
    </location>
</feature>
<evidence type="ECO:0000255" key="1">
    <source>
        <dbReference type="HAMAP-Rule" id="MF_01862"/>
    </source>
</evidence>
<dbReference type="EC" id="2.1.1.172" evidence="1"/>
<dbReference type="EMBL" id="AL590842">
    <property type="protein sequence ID" value="CAL19108.1"/>
    <property type="molecule type" value="Genomic_DNA"/>
</dbReference>
<dbReference type="EMBL" id="AE009952">
    <property type="protein sequence ID" value="AAM87298.1"/>
    <property type="molecule type" value="Genomic_DNA"/>
</dbReference>
<dbReference type="EMBL" id="AE017042">
    <property type="protein sequence ID" value="AAS63902.1"/>
    <property type="molecule type" value="Genomic_DNA"/>
</dbReference>
<dbReference type="PIR" id="AB0053">
    <property type="entry name" value="AB0053"/>
</dbReference>
<dbReference type="RefSeq" id="WP_002209206.1">
    <property type="nucleotide sequence ID" value="NZ_WUCM01000002.1"/>
</dbReference>
<dbReference type="RefSeq" id="YP_002345503.1">
    <property type="nucleotide sequence ID" value="NC_003143.1"/>
</dbReference>
<dbReference type="SMR" id="Q7CG56"/>
<dbReference type="STRING" id="214092.YPO0427"/>
<dbReference type="PaxDb" id="214092-YPO0427"/>
<dbReference type="DNASU" id="1148700"/>
<dbReference type="EnsemblBacteria" id="AAS63902">
    <property type="protein sequence ID" value="AAS63902"/>
    <property type="gene ID" value="YP_3754"/>
</dbReference>
<dbReference type="GeneID" id="57974183"/>
<dbReference type="KEGG" id="ype:YPO0427"/>
<dbReference type="KEGG" id="ypk:y3753"/>
<dbReference type="KEGG" id="ypm:YP_3754"/>
<dbReference type="PATRIC" id="fig|214092.21.peg.670"/>
<dbReference type="eggNOG" id="COG2813">
    <property type="taxonomic scope" value="Bacteria"/>
</dbReference>
<dbReference type="HOGENOM" id="CLU_049581_0_1_6"/>
<dbReference type="OMA" id="RHCQLWQ"/>
<dbReference type="OrthoDB" id="9816072at2"/>
<dbReference type="Proteomes" id="UP000000815">
    <property type="component" value="Chromosome"/>
</dbReference>
<dbReference type="Proteomes" id="UP000001019">
    <property type="component" value="Chromosome"/>
</dbReference>
<dbReference type="Proteomes" id="UP000002490">
    <property type="component" value="Chromosome"/>
</dbReference>
<dbReference type="GO" id="GO:0005737">
    <property type="term" value="C:cytoplasm"/>
    <property type="evidence" value="ECO:0007669"/>
    <property type="project" value="UniProtKB-SubCell"/>
</dbReference>
<dbReference type="GO" id="GO:0052914">
    <property type="term" value="F:16S rRNA (guanine(1207)-N(2))-methyltransferase activity"/>
    <property type="evidence" value="ECO:0007669"/>
    <property type="project" value="UniProtKB-EC"/>
</dbReference>
<dbReference type="GO" id="GO:0003676">
    <property type="term" value="F:nucleic acid binding"/>
    <property type="evidence" value="ECO:0007669"/>
    <property type="project" value="InterPro"/>
</dbReference>
<dbReference type="GO" id="GO:0008990">
    <property type="term" value="F:rRNA (guanine-N2-)-methyltransferase activity"/>
    <property type="evidence" value="ECO:0000318"/>
    <property type="project" value="GO_Central"/>
</dbReference>
<dbReference type="GO" id="GO:0070475">
    <property type="term" value="P:rRNA base methylation"/>
    <property type="evidence" value="ECO:0000318"/>
    <property type="project" value="GO_Central"/>
</dbReference>
<dbReference type="CDD" id="cd02440">
    <property type="entry name" value="AdoMet_MTases"/>
    <property type="match status" value="1"/>
</dbReference>
<dbReference type="Gene3D" id="3.40.50.150">
    <property type="entry name" value="Vaccinia Virus protein VP39"/>
    <property type="match status" value="2"/>
</dbReference>
<dbReference type="HAMAP" id="MF_01862">
    <property type="entry name" value="16SrRNA_methyltr_C"/>
    <property type="match status" value="1"/>
</dbReference>
<dbReference type="InterPro" id="IPR002052">
    <property type="entry name" value="DNA_methylase_N6_adenine_CS"/>
</dbReference>
<dbReference type="InterPro" id="IPR013675">
    <property type="entry name" value="Mtase_sm_N"/>
</dbReference>
<dbReference type="InterPro" id="IPR023543">
    <property type="entry name" value="rRNA_ssu_MeTfrase_C"/>
</dbReference>
<dbReference type="InterPro" id="IPR046977">
    <property type="entry name" value="RsmC/RlmG"/>
</dbReference>
<dbReference type="InterPro" id="IPR029063">
    <property type="entry name" value="SAM-dependent_MTases_sf"/>
</dbReference>
<dbReference type="InterPro" id="IPR007848">
    <property type="entry name" value="Small_mtfrase_dom"/>
</dbReference>
<dbReference type="NCBIfam" id="NF007023">
    <property type="entry name" value="PRK09489.1"/>
    <property type="match status" value="1"/>
</dbReference>
<dbReference type="PANTHER" id="PTHR47816">
    <property type="entry name" value="RIBOSOMAL RNA SMALL SUBUNIT METHYLTRANSFERASE C"/>
    <property type="match status" value="1"/>
</dbReference>
<dbReference type="PANTHER" id="PTHR47816:SF4">
    <property type="entry name" value="RIBOSOMAL RNA SMALL SUBUNIT METHYLTRANSFERASE C"/>
    <property type="match status" value="1"/>
</dbReference>
<dbReference type="Pfam" id="PF05175">
    <property type="entry name" value="MTS"/>
    <property type="match status" value="1"/>
</dbReference>
<dbReference type="Pfam" id="PF08468">
    <property type="entry name" value="MTS_N"/>
    <property type="match status" value="1"/>
</dbReference>
<dbReference type="SUPFAM" id="SSF53335">
    <property type="entry name" value="S-adenosyl-L-methionine-dependent methyltransferases"/>
    <property type="match status" value="1"/>
</dbReference>
<reference key="1">
    <citation type="journal article" date="2001" name="Nature">
        <title>Genome sequence of Yersinia pestis, the causative agent of plague.</title>
        <authorList>
            <person name="Parkhill J."/>
            <person name="Wren B.W."/>
            <person name="Thomson N.R."/>
            <person name="Titball R.W."/>
            <person name="Holden M.T.G."/>
            <person name="Prentice M.B."/>
            <person name="Sebaihia M."/>
            <person name="James K.D."/>
            <person name="Churcher C.M."/>
            <person name="Mungall K.L."/>
            <person name="Baker S."/>
            <person name="Basham D."/>
            <person name="Bentley S.D."/>
            <person name="Brooks K."/>
            <person name="Cerdeno-Tarraga A.-M."/>
            <person name="Chillingworth T."/>
            <person name="Cronin A."/>
            <person name="Davies R.M."/>
            <person name="Davis P."/>
            <person name="Dougan G."/>
            <person name="Feltwell T."/>
            <person name="Hamlin N."/>
            <person name="Holroyd S."/>
            <person name="Jagels K."/>
            <person name="Karlyshev A.V."/>
            <person name="Leather S."/>
            <person name="Moule S."/>
            <person name="Oyston P.C.F."/>
            <person name="Quail M.A."/>
            <person name="Rutherford K.M."/>
            <person name="Simmonds M."/>
            <person name="Skelton J."/>
            <person name="Stevens K."/>
            <person name="Whitehead S."/>
            <person name="Barrell B.G."/>
        </authorList>
    </citation>
    <scope>NUCLEOTIDE SEQUENCE [LARGE SCALE GENOMIC DNA]</scope>
    <source>
        <strain>CO-92 / Biovar Orientalis</strain>
    </source>
</reference>
<reference key="2">
    <citation type="journal article" date="2002" name="J. Bacteriol.">
        <title>Genome sequence of Yersinia pestis KIM.</title>
        <authorList>
            <person name="Deng W."/>
            <person name="Burland V."/>
            <person name="Plunkett G. III"/>
            <person name="Boutin A."/>
            <person name="Mayhew G.F."/>
            <person name="Liss P."/>
            <person name="Perna N.T."/>
            <person name="Rose D.J."/>
            <person name="Mau B."/>
            <person name="Zhou S."/>
            <person name="Schwartz D.C."/>
            <person name="Fetherston J.D."/>
            <person name="Lindler L.E."/>
            <person name="Brubaker R.R."/>
            <person name="Plano G.V."/>
            <person name="Straley S.C."/>
            <person name="McDonough K.A."/>
            <person name="Nilles M.L."/>
            <person name="Matson J.S."/>
            <person name="Blattner F.R."/>
            <person name="Perry R.D."/>
        </authorList>
    </citation>
    <scope>NUCLEOTIDE SEQUENCE [LARGE SCALE GENOMIC DNA]</scope>
    <source>
        <strain>KIM10+ / Biovar Mediaevalis</strain>
    </source>
</reference>
<reference key="3">
    <citation type="journal article" date="2004" name="DNA Res.">
        <title>Complete genome sequence of Yersinia pestis strain 91001, an isolate avirulent to humans.</title>
        <authorList>
            <person name="Song Y."/>
            <person name="Tong Z."/>
            <person name="Wang J."/>
            <person name="Wang L."/>
            <person name="Guo Z."/>
            <person name="Han Y."/>
            <person name="Zhang J."/>
            <person name="Pei D."/>
            <person name="Zhou D."/>
            <person name="Qin H."/>
            <person name="Pang X."/>
            <person name="Han Y."/>
            <person name="Zhai J."/>
            <person name="Li M."/>
            <person name="Cui B."/>
            <person name="Qi Z."/>
            <person name="Jin L."/>
            <person name="Dai R."/>
            <person name="Chen F."/>
            <person name="Li S."/>
            <person name="Ye C."/>
            <person name="Du Z."/>
            <person name="Lin W."/>
            <person name="Wang J."/>
            <person name="Yu J."/>
            <person name="Yang H."/>
            <person name="Wang J."/>
            <person name="Huang P."/>
            <person name="Yang R."/>
        </authorList>
    </citation>
    <scope>NUCLEOTIDE SEQUENCE [LARGE SCALE GENOMIC DNA]</scope>
    <source>
        <strain>91001 / Biovar Mediaevalis</strain>
    </source>
</reference>
<proteinExistence type="inferred from homology"/>
<comment type="function">
    <text evidence="1">Specifically methylates the guanine in position 1207 of 16S rRNA in the 30S particle.</text>
</comment>
<comment type="catalytic activity">
    <reaction evidence="1">
        <text>guanosine(1207) in 16S rRNA + S-adenosyl-L-methionine = N(2)-methylguanosine(1207) in 16S rRNA + S-adenosyl-L-homocysteine + H(+)</text>
        <dbReference type="Rhea" id="RHEA:42736"/>
        <dbReference type="Rhea" id="RHEA-COMP:10213"/>
        <dbReference type="Rhea" id="RHEA-COMP:10214"/>
        <dbReference type="ChEBI" id="CHEBI:15378"/>
        <dbReference type="ChEBI" id="CHEBI:57856"/>
        <dbReference type="ChEBI" id="CHEBI:59789"/>
        <dbReference type="ChEBI" id="CHEBI:74269"/>
        <dbReference type="ChEBI" id="CHEBI:74481"/>
        <dbReference type="EC" id="2.1.1.172"/>
    </reaction>
</comment>
<comment type="subunit">
    <text evidence="1">Monomer.</text>
</comment>
<comment type="subcellular location">
    <subcellularLocation>
        <location evidence="1">Cytoplasm</location>
    </subcellularLocation>
</comment>
<comment type="similarity">
    <text evidence="1">Belongs to the methyltransferase superfamily. RsmC family.</text>
</comment>
<organism>
    <name type="scientific">Yersinia pestis</name>
    <dbReference type="NCBI Taxonomy" id="632"/>
    <lineage>
        <taxon>Bacteria</taxon>
        <taxon>Pseudomonadati</taxon>
        <taxon>Pseudomonadota</taxon>
        <taxon>Gammaproteobacteria</taxon>
        <taxon>Enterobacterales</taxon>
        <taxon>Yersiniaceae</taxon>
        <taxon>Yersinia</taxon>
    </lineage>
</organism>
<accession>Q7CG56</accession>
<accession>Q74PY0</accession>
<name>RSMC_YERPE</name>